<feature type="chain" id="PRO_0000271351" description="Anaphase-promoting complex subunit CDC26">
    <location>
        <begin position="1"/>
        <end position="88"/>
    </location>
</feature>
<feature type="region of interest" description="Disordered" evidence="3">
    <location>
        <begin position="17"/>
        <end position="36"/>
    </location>
</feature>
<feature type="region of interest" description="Disordered" evidence="3">
    <location>
        <begin position="69"/>
        <end position="88"/>
    </location>
</feature>
<feature type="coiled-coil region" evidence="2">
    <location>
        <begin position="7"/>
        <end position="37"/>
    </location>
</feature>
<feature type="compositionally biased region" description="Polar residues" evidence="3">
    <location>
        <begin position="78"/>
        <end position="88"/>
    </location>
</feature>
<evidence type="ECO:0000250" key="1">
    <source>
        <dbReference type="UniProtKB" id="Q8NHZ8"/>
    </source>
</evidence>
<evidence type="ECO:0000255" key="2"/>
<evidence type="ECO:0000256" key="3">
    <source>
        <dbReference type="SAM" id="MobiDB-lite"/>
    </source>
</evidence>
<evidence type="ECO:0000269" key="4">
    <source>
    </source>
</evidence>
<evidence type="ECO:0000305" key="5"/>
<sequence>MLRRKPTRLELKLDDTEEFESVKKELESRKKQRDEVDVVGVATSSEMSGAAGGTADGKTREQMIHERIGYKPHPKPNTLPSLFGNLQF</sequence>
<organism>
    <name type="scientific">Danio rerio</name>
    <name type="common">Zebrafish</name>
    <name type="synonym">Brachydanio rerio</name>
    <dbReference type="NCBI Taxonomy" id="7955"/>
    <lineage>
        <taxon>Eukaryota</taxon>
        <taxon>Metazoa</taxon>
        <taxon>Chordata</taxon>
        <taxon>Craniata</taxon>
        <taxon>Vertebrata</taxon>
        <taxon>Euteleostomi</taxon>
        <taxon>Actinopterygii</taxon>
        <taxon>Neopterygii</taxon>
        <taxon>Teleostei</taxon>
        <taxon>Ostariophysi</taxon>
        <taxon>Cypriniformes</taxon>
        <taxon>Danionidae</taxon>
        <taxon>Danioninae</taxon>
        <taxon>Danio</taxon>
    </lineage>
</organism>
<protein>
    <recommendedName>
        <fullName>Anaphase-promoting complex subunit CDC26</fullName>
    </recommendedName>
    <alternativeName>
        <fullName>Cell division cycle protein 26 homolog</fullName>
    </alternativeName>
</protein>
<reference key="1">
    <citation type="journal article" date="2007" name="Dev. Biol.">
        <title>The anaphase-promoting complex is required in both dividing and quiescent cells during zebrafish development.</title>
        <authorList>
            <person name="Wehman A.M."/>
            <person name="Staub W."/>
            <person name="Baier H."/>
        </authorList>
    </citation>
    <scope>NUCLEOTIDE SEQUENCE [MRNA]</scope>
    <scope>FUNCTION</scope>
    <source>
        <strain>TL</strain>
    </source>
</reference>
<reference key="2">
    <citation type="journal article" date="2013" name="Nature">
        <title>The zebrafish reference genome sequence and its relationship to the human genome.</title>
        <authorList>
            <person name="Howe K."/>
            <person name="Clark M.D."/>
            <person name="Torroja C.F."/>
            <person name="Torrance J."/>
            <person name="Berthelot C."/>
            <person name="Muffato M."/>
            <person name="Collins J.E."/>
            <person name="Humphray S."/>
            <person name="McLaren K."/>
            <person name="Matthews L."/>
            <person name="McLaren S."/>
            <person name="Sealy I."/>
            <person name="Caccamo M."/>
            <person name="Churcher C."/>
            <person name="Scott C."/>
            <person name="Barrett J.C."/>
            <person name="Koch R."/>
            <person name="Rauch G.J."/>
            <person name="White S."/>
            <person name="Chow W."/>
            <person name="Kilian B."/>
            <person name="Quintais L.T."/>
            <person name="Guerra-Assuncao J.A."/>
            <person name="Zhou Y."/>
            <person name="Gu Y."/>
            <person name="Yen J."/>
            <person name="Vogel J.H."/>
            <person name="Eyre T."/>
            <person name="Redmond S."/>
            <person name="Banerjee R."/>
            <person name="Chi J."/>
            <person name="Fu B."/>
            <person name="Langley E."/>
            <person name="Maguire S.F."/>
            <person name="Laird G.K."/>
            <person name="Lloyd D."/>
            <person name="Kenyon E."/>
            <person name="Donaldson S."/>
            <person name="Sehra H."/>
            <person name="Almeida-King J."/>
            <person name="Loveland J."/>
            <person name="Trevanion S."/>
            <person name="Jones M."/>
            <person name="Quail M."/>
            <person name="Willey D."/>
            <person name="Hunt A."/>
            <person name="Burton J."/>
            <person name="Sims S."/>
            <person name="McLay K."/>
            <person name="Plumb B."/>
            <person name="Davis J."/>
            <person name="Clee C."/>
            <person name="Oliver K."/>
            <person name="Clark R."/>
            <person name="Riddle C."/>
            <person name="Elliot D."/>
            <person name="Threadgold G."/>
            <person name="Harden G."/>
            <person name="Ware D."/>
            <person name="Begum S."/>
            <person name="Mortimore B."/>
            <person name="Kerry G."/>
            <person name="Heath P."/>
            <person name="Phillimore B."/>
            <person name="Tracey A."/>
            <person name="Corby N."/>
            <person name="Dunn M."/>
            <person name="Johnson C."/>
            <person name="Wood J."/>
            <person name="Clark S."/>
            <person name="Pelan S."/>
            <person name="Griffiths G."/>
            <person name="Smith M."/>
            <person name="Glithero R."/>
            <person name="Howden P."/>
            <person name="Barker N."/>
            <person name="Lloyd C."/>
            <person name="Stevens C."/>
            <person name="Harley J."/>
            <person name="Holt K."/>
            <person name="Panagiotidis G."/>
            <person name="Lovell J."/>
            <person name="Beasley H."/>
            <person name="Henderson C."/>
            <person name="Gordon D."/>
            <person name="Auger K."/>
            <person name="Wright D."/>
            <person name="Collins J."/>
            <person name="Raisen C."/>
            <person name="Dyer L."/>
            <person name="Leung K."/>
            <person name="Robertson L."/>
            <person name="Ambridge K."/>
            <person name="Leongamornlert D."/>
            <person name="McGuire S."/>
            <person name="Gilderthorp R."/>
            <person name="Griffiths C."/>
            <person name="Manthravadi D."/>
            <person name="Nichol S."/>
            <person name="Barker G."/>
            <person name="Whitehead S."/>
            <person name="Kay M."/>
            <person name="Brown J."/>
            <person name="Murnane C."/>
            <person name="Gray E."/>
            <person name="Humphries M."/>
            <person name="Sycamore N."/>
            <person name="Barker D."/>
            <person name="Saunders D."/>
            <person name="Wallis J."/>
            <person name="Babbage A."/>
            <person name="Hammond S."/>
            <person name="Mashreghi-Mohammadi M."/>
            <person name="Barr L."/>
            <person name="Martin S."/>
            <person name="Wray P."/>
            <person name="Ellington A."/>
            <person name="Matthews N."/>
            <person name="Ellwood M."/>
            <person name="Woodmansey R."/>
            <person name="Clark G."/>
            <person name="Cooper J."/>
            <person name="Tromans A."/>
            <person name="Grafham D."/>
            <person name="Skuce C."/>
            <person name="Pandian R."/>
            <person name="Andrews R."/>
            <person name="Harrison E."/>
            <person name="Kimberley A."/>
            <person name="Garnett J."/>
            <person name="Fosker N."/>
            <person name="Hall R."/>
            <person name="Garner P."/>
            <person name="Kelly D."/>
            <person name="Bird C."/>
            <person name="Palmer S."/>
            <person name="Gehring I."/>
            <person name="Berger A."/>
            <person name="Dooley C.M."/>
            <person name="Ersan-Urun Z."/>
            <person name="Eser C."/>
            <person name="Geiger H."/>
            <person name="Geisler M."/>
            <person name="Karotki L."/>
            <person name="Kirn A."/>
            <person name="Konantz J."/>
            <person name="Konantz M."/>
            <person name="Oberlander M."/>
            <person name="Rudolph-Geiger S."/>
            <person name="Teucke M."/>
            <person name="Lanz C."/>
            <person name="Raddatz G."/>
            <person name="Osoegawa K."/>
            <person name="Zhu B."/>
            <person name="Rapp A."/>
            <person name="Widaa S."/>
            <person name="Langford C."/>
            <person name="Yang F."/>
            <person name="Schuster S.C."/>
            <person name="Carter N.P."/>
            <person name="Harrow J."/>
            <person name="Ning Z."/>
            <person name="Herrero J."/>
            <person name="Searle S.M."/>
            <person name="Enright A."/>
            <person name="Geisler R."/>
            <person name="Plasterk R.H."/>
            <person name="Lee C."/>
            <person name="Westerfield M."/>
            <person name="de Jong P.J."/>
            <person name="Zon L.I."/>
            <person name="Postlethwait J.H."/>
            <person name="Nusslein-Volhard C."/>
            <person name="Hubbard T.J."/>
            <person name="Roest Crollius H."/>
            <person name="Rogers J."/>
            <person name="Stemple D.L."/>
        </authorList>
    </citation>
    <scope>NUCLEOTIDE SEQUENCE [LARGE SCALE GENOMIC DNA]</scope>
    <source>
        <strain>Tuebingen</strain>
    </source>
</reference>
<reference key="3">
    <citation type="submission" date="2004-08" db="EMBL/GenBank/DDBJ databases">
        <authorList>
            <consortium name="NIH - Zebrafish Gene Collection (ZGC) project"/>
        </authorList>
    </citation>
    <scope>NUCLEOTIDE SEQUENCE [LARGE SCALE MRNA]</scope>
    <source>
        <tissue>Embryo</tissue>
    </source>
</reference>
<dbReference type="EMBL" id="DQ352177">
    <property type="protein sequence ID" value="ABD22986.1"/>
    <property type="molecule type" value="mRNA"/>
</dbReference>
<dbReference type="EMBL" id="CR759821">
    <property type="protein sequence ID" value="CAM15227.1"/>
    <property type="molecule type" value="Genomic_DNA"/>
</dbReference>
<dbReference type="EMBL" id="BC080217">
    <property type="protein sequence ID" value="AAH80217.1"/>
    <property type="molecule type" value="mRNA"/>
</dbReference>
<dbReference type="RefSeq" id="NP_001004005.1">
    <property type="nucleotide sequence ID" value="NM_001004005.2"/>
</dbReference>
<dbReference type="RefSeq" id="XP_017211560.1">
    <property type="nucleotide sequence ID" value="XM_017356071.1"/>
</dbReference>
<dbReference type="RefSeq" id="XP_068077252.1">
    <property type="nucleotide sequence ID" value="XM_068221151.1"/>
</dbReference>
<dbReference type="RefSeq" id="XP_068077253.1">
    <property type="nucleotide sequence ID" value="XM_068221152.1"/>
</dbReference>
<dbReference type="SMR" id="Q68EK9"/>
<dbReference type="FunCoup" id="Q68EK9">
    <property type="interactions" value="1809"/>
</dbReference>
<dbReference type="STRING" id="7955.ENSDARP00000100739"/>
<dbReference type="PaxDb" id="7955-ENSDARP00000100739"/>
<dbReference type="Ensembl" id="ENSDART00000112793">
    <property type="protein sequence ID" value="ENSDARP00000100739"/>
    <property type="gene ID" value="ENSDARG00000077815"/>
</dbReference>
<dbReference type="Ensembl" id="ENSDART00000183470">
    <property type="protein sequence ID" value="ENSDARP00000155045"/>
    <property type="gene ID" value="ENSDARG00000115575"/>
</dbReference>
<dbReference type="GeneID" id="445501"/>
<dbReference type="KEGG" id="dre:445501"/>
<dbReference type="AGR" id="ZFIN:ZDB-GENE-040822-18"/>
<dbReference type="CTD" id="246184"/>
<dbReference type="ZFIN" id="ZDB-GENE-040822-18">
    <property type="gene designation" value="cdc26"/>
</dbReference>
<dbReference type="eggNOG" id="ENOG502S5GK">
    <property type="taxonomic scope" value="Eukaryota"/>
</dbReference>
<dbReference type="HOGENOM" id="CLU_190086_0_0_1"/>
<dbReference type="InParanoid" id="Q68EK9"/>
<dbReference type="OMA" id="NREQMIN"/>
<dbReference type="OrthoDB" id="2422341at2759"/>
<dbReference type="PhylomeDB" id="Q68EK9"/>
<dbReference type="TreeFam" id="TF101057"/>
<dbReference type="UniPathway" id="UPA00143"/>
<dbReference type="PRO" id="PR:Q68EK9"/>
<dbReference type="Proteomes" id="UP000000437">
    <property type="component" value="Alternate scaffold 5"/>
</dbReference>
<dbReference type="Proteomes" id="UP000000437">
    <property type="component" value="Chromosome 5"/>
</dbReference>
<dbReference type="Bgee" id="ENSDARG00000077815">
    <property type="expression patterns" value="Expressed in gastrula and 23 other cell types or tissues"/>
</dbReference>
<dbReference type="GO" id="GO:0005680">
    <property type="term" value="C:anaphase-promoting complex"/>
    <property type="evidence" value="ECO:0000250"/>
    <property type="project" value="UniProtKB"/>
</dbReference>
<dbReference type="GO" id="GO:0031145">
    <property type="term" value="P:anaphase-promoting complex-dependent catabolic process"/>
    <property type="evidence" value="ECO:0000250"/>
    <property type="project" value="UniProtKB"/>
</dbReference>
<dbReference type="GO" id="GO:0051301">
    <property type="term" value="P:cell division"/>
    <property type="evidence" value="ECO:0007669"/>
    <property type="project" value="UniProtKB-KW"/>
</dbReference>
<dbReference type="GO" id="GO:0000278">
    <property type="term" value="P:mitotic cell cycle"/>
    <property type="evidence" value="ECO:0000315"/>
    <property type="project" value="ZFIN"/>
</dbReference>
<dbReference type="GO" id="GO:0141198">
    <property type="term" value="P:protein branched polyubiquitination"/>
    <property type="evidence" value="ECO:0000250"/>
    <property type="project" value="UniProtKB"/>
</dbReference>
<dbReference type="GO" id="GO:0070979">
    <property type="term" value="P:protein K11-linked ubiquitination"/>
    <property type="evidence" value="ECO:0000250"/>
    <property type="project" value="UniProtKB"/>
</dbReference>
<dbReference type="GO" id="GO:0070936">
    <property type="term" value="P:protein K48-linked ubiquitination"/>
    <property type="evidence" value="ECO:0000250"/>
    <property type="project" value="UniProtKB"/>
</dbReference>
<dbReference type="GO" id="GO:0007346">
    <property type="term" value="P:regulation of mitotic cell cycle"/>
    <property type="evidence" value="ECO:0000315"/>
    <property type="project" value="ZFIN"/>
</dbReference>
<dbReference type="InterPro" id="IPR018860">
    <property type="entry name" value="APC_suCDC26"/>
</dbReference>
<dbReference type="PANTHER" id="PTHR28579">
    <property type="entry name" value="ANAPHASE-PROMOTING COMPLEX SUBUNIT CDC26"/>
    <property type="match status" value="1"/>
</dbReference>
<dbReference type="PANTHER" id="PTHR28579:SF1">
    <property type="entry name" value="ANAPHASE-PROMOTING COMPLEX SUBUNIT CDC26"/>
    <property type="match status" value="1"/>
</dbReference>
<dbReference type="Pfam" id="PF10471">
    <property type="entry name" value="ANAPC_CDC26"/>
    <property type="match status" value="1"/>
</dbReference>
<accession>Q68EK9</accession>
<accession>A2CES9</accession>
<proteinExistence type="inferred from homology"/>
<gene>
    <name type="primary">cdc26</name>
    <name type="ORF">si:dkey-190c14.5</name>
    <name type="ORF">zgc:100965</name>
</gene>
<comment type="function">
    <text evidence="1 4">Component of the anaphase promoting complex/cyclosome (APC/C), a cell cycle-regulated E3 ubiquitin ligase that controls progression through mitosis and the G1 phase of the cell cycle (PubMed:17141209). The APC/C complex acts by mediating ubiquitination and subsequent degradation of target proteins: it mainly mediates the formation of 'Lys-11'-linked polyubiquitin chains and, to a lower extent, the formation of 'Lys-48'- and 'Lys-63'-linked polyubiquitin chains (By similarity). The APC/C complex catalyzes assembly of branched 'Lys-11'-/'Lys-48'-linked branched ubiquitin chains on target proteins (By similarity).</text>
</comment>
<comment type="pathway">
    <text evidence="1">Protein modification; protein ubiquitination.</text>
</comment>
<comment type="subunit">
    <text evidence="1">The APC/C is composed of at least 12 subunits.</text>
</comment>
<comment type="subcellular location">
    <subcellularLocation>
        <location evidence="5">Nucleus</location>
    </subcellularLocation>
</comment>
<comment type="similarity">
    <text evidence="5">Belongs to the CDC26 family.</text>
</comment>
<name>CDC26_DANRE</name>
<keyword id="KW-0131">Cell cycle</keyword>
<keyword id="KW-0132">Cell division</keyword>
<keyword id="KW-0175">Coiled coil</keyword>
<keyword id="KW-0498">Mitosis</keyword>
<keyword id="KW-0539">Nucleus</keyword>
<keyword id="KW-1185">Reference proteome</keyword>
<keyword id="KW-0833">Ubl conjugation pathway</keyword>